<feature type="chain" id="PRO_0000153482" description="Histidinol-phosphate aminotransferase">
    <location>
        <begin position="1"/>
        <end position="362"/>
    </location>
</feature>
<feature type="modified residue" description="N6-(pyridoxal phosphate)lysine" evidence="1">
    <location>
        <position position="218"/>
    </location>
</feature>
<keyword id="KW-0028">Amino-acid biosynthesis</keyword>
<keyword id="KW-0032">Aminotransferase</keyword>
<keyword id="KW-0368">Histidine biosynthesis</keyword>
<keyword id="KW-0663">Pyridoxal phosphate</keyword>
<keyword id="KW-0808">Transferase</keyword>
<proteinExistence type="inferred from homology"/>
<name>HIS8_XANC8</name>
<protein>
    <recommendedName>
        <fullName evidence="1">Histidinol-phosphate aminotransferase</fullName>
        <ecNumber evidence="1">2.6.1.9</ecNumber>
    </recommendedName>
    <alternativeName>
        <fullName evidence="1">Imidazole acetol-phosphate transaminase</fullName>
    </alternativeName>
</protein>
<sequence length="362" mass="38286">MSTASVMDLVRDDLRAFAGYASARTSALQGDVWLNANESAWGNPADPDASTRRYPDPQPKGLRAALAQLYGCAPEQLLIGRGSDEAIDLLVRGLCVPERDAVVVTPPVFGMYAVCARLQNAPLVEVPLVDGADGLHADVPAIVQAALDAKAKLVFLCSPSNPAGSAIPLAEIEAALQALQGKAVVVVDEAYGEFSDVPSAIGLLARYDNLAVLRTLSKAHALAAARIGSLIANAELIALLRRCQAPYPVPTPCAVMAEQALSAPALAVTQRRVTEIRAERARLHAALVQVAGVRQVYPSQGNFLLVRFDDAEAAFQALLEAGVVVRDQRAVPRLSDALRITIGTPDQNDRVLGALQRKQEAA</sequence>
<organism>
    <name type="scientific">Xanthomonas campestris pv. campestris (strain 8004)</name>
    <dbReference type="NCBI Taxonomy" id="314565"/>
    <lineage>
        <taxon>Bacteria</taxon>
        <taxon>Pseudomonadati</taxon>
        <taxon>Pseudomonadota</taxon>
        <taxon>Gammaproteobacteria</taxon>
        <taxon>Lysobacterales</taxon>
        <taxon>Lysobacteraceae</taxon>
        <taxon>Xanthomonas</taxon>
    </lineage>
</organism>
<accession>Q4UU41</accession>
<comment type="catalytic activity">
    <reaction evidence="1">
        <text>L-histidinol phosphate + 2-oxoglutarate = 3-(imidazol-4-yl)-2-oxopropyl phosphate + L-glutamate</text>
        <dbReference type="Rhea" id="RHEA:23744"/>
        <dbReference type="ChEBI" id="CHEBI:16810"/>
        <dbReference type="ChEBI" id="CHEBI:29985"/>
        <dbReference type="ChEBI" id="CHEBI:57766"/>
        <dbReference type="ChEBI" id="CHEBI:57980"/>
        <dbReference type="EC" id="2.6.1.9"/>
    </reaction>
</comment>
<comment type="cofactor">
    <cofactor evidence="1">
        <name>pyridoxal 5'-phosphate</name>
        <dbReference type="ChEBI" id="CHEBI:597326"/>
    </cofactor>
</comment>
<comment type="pathway">
    <text evidence="1">Amino-acid biosynthesis; L-histidine biosynthesis; L-histidine from 5-phospho-alpha-D-ribose 1-diphosphate: step 7/9.</text>
</comment>
<comment type="subunit">
    <text evidence="1">Homodimer.</text>
</comment>
<comment type="similarity">
    <text evidence="1">Belongs to the class-II pyridoxal-phosphate-dependent aminotransferase family. Histidinol-phosphate aminotransferase subfamily.</text>
</comment>
<gene>
    <name evidence="1" type="primary">hisC</name>
    <name type="ordered locus">XC_2379</name>
</gene>
<evidence type="ECO:0000255" key="1">
    <source>
        <dbReference type="HAMAP-Rule" id="MF_01023"/>
    </source>
</evidence>
<dbReference type="EC" id="2.6.1.9" evidence="1"/>
<dbReference type="EMBL" id="CP000050">
    <property type="protein sequence ID" value="AAY49432.1"/>
    <property type="molecule type" value="Genomic_DNA"/>
</dbReference>
<dbReference type="RefSeq" id="WP_011269811.1">
    <property type="nucleotide sequence ID" value="NZ_CP155948.1"/>
</dbReference>
<dbReference type="SMR" id="Q4UU41"/>
<dbReference type="KEGG" id="xcb:XC_2379"/>
<dbReference type="HOGENOM" id="CLU_017584_3_1_6"/>
<dbReference type="UniPathway" id="UPA00031">
    <property type="reaction ID" value="UER00012"/>
</dbReference>
<dbReference type="Proteomes" id="UP000000420">
    <property type="component" value="Chromosome"/>
</dbReference>
<dbReference type="GO" id="GO:0004400">
    <property type="term" value="F:histidinol-phosphate transaminase activity"/>
    <property type="evidence" value="ECO:0007669"/>
    <property type="project" value="UniProtKB-UniRule"/>
</dbReference>
<dbReference type="GO" id="GO:0030170">
    <property type="term" value="F:pyridoxal phosphate binding"/>
    <property type="evidence" value="ECO:0007669"/>
    <property type="project" value="InterPro"/>
</dbReference>
<dbReference type="GO" id="GO:0000105">
    <property type="term" value="P:L-histidine biosynthetic process"/>
    <property type="evidence" value="ECO:0007669"/>
    <property type="project" value="UniProtKB-UniRule"/>
</dbReference>
<dbReference type="CDD" id="cd00609">
    <property type="entry name" value="AAT_like"/>
    <property type="match status" value="1"/>
</dbReference>
<dbReference type="Gene3D" id="3.90.1150.10">
    <property type="entry name" value="Aspartate Aminotransferase, domain 1"/>
    <property type="match status" value="1"/>
</dbReference>
<dbReference type="Gene3D" id="3.40.640.10">
    <property type="entry name" value="Type I PLP-dependent aspartate aminotransferase-like (Major domain)"/>
    <property type="match status" value="1"/>
</dbReference>
<dbReference type="HAMAP" id="MF_01023">
    <property type="entry name" value="HisC_aminotrans_2"/>
    <property type="match status" value="1"/>
</dbReference>
<dbReference type="InterPro" id="IPR004839">
    <property type="entry name" value="Aminotransferase_I/II_large"/>
</dbReference>
<dbReference type="InterPro" id="IPR005861">
    <property type="entry name" value="HisP_aminotrans"/>
</dbReference>
<dbReference type="InterPro" id="IPR015424">
    <property type="entry name" value="PyrdxlP-dep_Trfase"/>
</dbReference>
<dbReference type="InterPro" id="IPR015421">
    <property type="entry name" value="PyrdxlP-dep_Trfase_major"/>
</dbReference>
<dbReference type="InterPro" id="IPR015422">
    <property type="entry name" value="PyrdxlP-dep_Trfase_small"/>
</dbReference>
<dbReference type="NCBIfam" id="TIGR01141">
    <property type="entry name" value="hisC"/>
    <property type="match status" value="1"/>
</dbReference>
<dbReference type="PANTHER" id="PTHR42885:SF2">
    <property type="entry name" value="HISTIDINOL-PHOSPHATE AMINOTRANSFERASE"/>
    <property type="match status" value="1"/>
</dbReference>
<dbReference type="PANTHER" id="PTHR42885">
    <property type="entry name" value="HISTIDINOL-PHOSPHATE AMINOTRANSFERASE-RELATED"/>
    <property type="match status" value="1"/>
</dbReference>
<dbReference type="Pfam" id="PF00155">
    <property type="entry name" value="Aminotran_1_2"/>
    <property type="match status" value="1"/>
</dbReference>
<dbReference type="SUPFAM" id="SSF53383">
    <property type="entry name" value="PLP-dependent transferases"/>
    <property type="match status" value="1"/>
</dbReference>
<reference key="1">
    <citation type="journal article" date="2005" name="Genome Res.">
        <title>Comparative and functional genomic analyses of the pathogenicity of phytopathogen Xanthomonas campestris pv. campestris.</title>
        <authorList>
            <person name="Qian W."/>
            <person name="Jia Y."/>
            <person name="Ren S.-X."/>
            <person name="He Y.-Q."/>
            <person name="Feng J.-X."/>
            <person name="Lu L.-F."/>
            <person name="Sun Q."/>
            <person name="Ying G."/>
            <person name="Tang D.-J."/>
            <person name="Tang H."/>
            <person name="Wu W."/>
            <person name="Hao P."/>
            <person name="Wang L."/>
            <person name="Jiang B.-L."/>
            <person name="Zeng S."/>
            <person name="Gu W.-Y."/>
            <person name="Lu G."/>
            <person name="Rong L."/>
            <person name="Tian Y."/>
            <person name="Yao Z."/>
            <person name="Fu G."/>
            <person name="Chen B."/>
            <person name="Fang R."/>
            <person name="Qiang B."/>
            <person name="Chen Z."/>
            <person name="Zhao G.-P."/>
            <person name="Tang J.-L."/>
            <person name="He C."/>
        </authorList>
    </citation>
    <scope>NUCLEOTIDE SEQUENCE [LARGE SCALE GENOMIC DNA]</scope>
    <source>
        <strain>8004</strain>
    </source>
</reference>